<gene>
    <name evidence="1" type="primary">ubiG</name>
    <name type="ordered locus">Pfl01_4081</name>
</gene>
<dbReference type="EC" id="2.1.1.222" evidence="1"/>
<dbReference type="EC" id="2.1.1.64" evidence="1"/>
<dbReference type="EMBL" id="CP000094">
    <property type="protein sequence ID" value="ABA75818.1"/>
    <property type="molecule type" value="Genomic_DNA"/>
</dbReference>
<dbReference type="RefSeq" id="WP_007950906.1">
    <property type="nucleotide sequence ID" value="NC_007492.2"/>
</dbReference>
<dbReference type="SMR" id="Q3K8T6"/>
<dbReference type="KEGG" id="pfo:Pfl01_4081"/>
<dbReference type="eggNOG" id="COG2227">
    <property type="taxonomic scope" value="Bacteria"/>
</dbReference>
<dbReference type="HOGENOM" id="CLU_042432_5_0_6"/>
<dbReference type="UniPathway" id="UPA00232"/>
<dbReference type="Proteomes" id="UP000002704">
    <property type="component" value="Chromosome"/>
</dbReference>
<dbReference type="GO" id="GO:0102208">
    <property type="term" value="F:2-polyprenyl-6-hydroxyphenol methylase activity"/>
    <property type="evidence" value="ECO:0007669"/>
    <property type="project" value="UniProtKB-EC"/>
</dbReference>
<dbReference type="GO" id="GO:0061542">
    <property type="term" value="F:3-demethylubiquinol 3-O-methyltransferase activity"/>
    <property type="evidence" value="ECO:0007669"/>
    <property type="project" value="UniProtKB-UniRule"/>
</dbReference>
<dbReference type="GO" id="GO:0010420">
    <property type="term" value="F:polyprenyldihydroxybenzoate methyltransferase activity"/>
    <property type="evidence" value="ECO:0007669"/>
    <property type="project" value="InterPro"/>
</dbReference>
<dbReference type="GO" id="GO:0032259">
    <property type="term" value="P:methylation"/>
    <property type="evidence" value="ECO:0007669"/>
    <property type="project" value="UniProtKB-KW"/>
</dbReference>
<dbReference type="CDD" id="cd02440">
    <property type="entry name" value="AdoMet_MTases"/>
    <property type="match status" value="1"/>
</dbReference>
<dbReference type="FunFam" id="3.40.50.150:FF:000028">
    <property type="entry name" value="Ubiquinone biosynthesis O-methyltransferase"/>
    <property type="match status" value="1"/>
</dbReference>
<dbReference type="Gene3D" id="3.40.50.150">
    <property type="entry name" value="Vaccinia Virus protein VP39"/>
    <property type="match status" value="1"/>
</dbReference>
<dbReference type="HAMAP" id="MF_00472">
    <property type="entry name" value="UbiG"/>
    <property type="match status" value="1"/>
</dbReference>
<dbReference type="InterPro" id="IPR029063">
    <property type="entry name" value="SAM-dependent_MTases_sf"/>
</dbReference>
<dbReference type="InterPro" id="IPR010233">
    <property type="entry name" value="UbiG_MeTrfase"/>
</dbReference>
<dbReference type="NCBIfam" id="TIGR01983">
    <property type="entry name" value="UbiG"/>
    <property type="match status" value="1"/>
</dbReference>
<dbReference type="PANTHER" id="PTHR43464">
    <property type="entry name" value="METHYLTRANSFERASE"/>
    <property type="match status" value="1"/>
</dbReference>
<dbReference type="PANTHER" id="PTHR43464:SF19">
    <property type="entry name" value="UBIQUINONE BIOSYNTHESIS O-METHYLTRANSFERASE, MITOCHONDRIAL"/>
    <property type="match status" value="1"/>
</dbReference>
<dbReference type="Pfam" id="PF13489">
    <property type="entry name" value="Methyltransf_23"/>
    <property type="match status" value="1"/>
</dbReference>
<dbReference type="SUPFAM" id="SSF53335">
    <property type="entry name" value="S-adenosyl-L-methionine-dependent methyltransferases"/>
    <property type="match status" value="1"/>
</dbReference>
<protein>
    <recommendedName>
        <fullName evidence="1">Ubiquinone biosynthesis O-methyltransferase</fullName>
    </recommendedName>
    <alternativeName>
        <fullName evidence="1">2-polyprenyl-6-hydroxyphenol methylase</fullName>
        <ecNumber evidence="1">2.1.1.222</ecNumber>
    </alternativeName>
    <alternativeName>
        <fullName evidence="1">3-demethylubiquinone 3-O-methyltransferase</fullName>
        <ecNumber evidence="1">2.1.1.64</ecNumber>
    </alternativeName>
</protein>
<keyword id="KW-0489">Methyltransferase</keyword>
<keyword id="KW-0949">S-adenosyl-L-methionine</keyword>
<keyword id="KW-0808">Transferase</keyword>
<keyword id="KW-0831">Ubiquinone biosynthesis</keyword>
<comment type="function">
    <text evidence="1">O-methyltransferase that catalyzes the 2 O-methylation steps in the ubiquinone biosynthetic pathway.</text>
</comment>
<comment type="catalytic activity">
    <reaction evidence="1">
        <text>a 3-demethylubiquinol + S-adenosyl-L-methionine = a ubiquinol + S-adenosyl-L-homocysteine + H(+)</text>
        <dbReference type="Rhea" id="RHEA:44380"/>
        <dbReference type="Rhea" id="RHEA-COMP:9566"/>
        <dbReference type="Rhea" id="RHEA-COMP:10914"/>
        <dbReference type="ChEBI" id="CHEBI:15378"/>
        <dbReference type="ChEBI" id="CHEBI:17976"/>
        <dbReference type="ChEBI" id="CHEBI:57856"/>
        <dbReference type="ChEBI" id="CHEBI:59789"/>
        <dbReference type="ChEBI" id="CHEBI:84422"/>
        <dbReference type="EC" id="2.1.1.64"/>
    </reaction>
</comment>
<comment type="catalytic activity">
    <reaction evidence="1">
        <text>a 3-(all-trans-polyprenyl)benzene-1,2-diol + S-adenosyl-L-methionine = a 2-methoxy-6-(all-trans-polyprenyl)phenol + S-adenosyl-L-homocysteine + H(+)</text>
        <dbReference type="Rhea" id="RHEA:31411"/>
        <dbReference type="Rhea" id="RHEA-COMP:9550"/>
        <dbReference type="Rhea" id="RHEA-COMP:9551"/>
        <dbReference type="ChEBI" id="CHEBI:15378"/>
        <dbReference type="ChEBI" id="CHEBI:57856"/>
        <dbReference type="ChEBI" id="CHEBI:59789"/>
        <dbReference type="ChEBI" id="CHEBI:62729"/>
        <dbReference type="ChEBI" id="CHEBI:62731"/>
        <dbReference type="EC" id="2.1.1.222"/>
    </reaction>
</comment>
<comment type="pathway">
    <text evidence="1">Cofactor biosynthesis; ubiquinone biosynthesis.</text>
</comment>
<comment type="similarity">
    <text evidence="1">Belongs to the methyltransferase superfamily. UbiG/COQ3 family.</text>
</comment>
<reference key="1">
    <citation type="journal article" date="2009" name="Genome Biol.">
        <title>Genomic and genetic analyses of diversity and plant interactions of Pseudomonas fluorescens.</title>
        <authorList>
            <person name="Silby M.W."/>
            <person name="Cerdeno-Tarraga A.M."/>
            <person name="Vernikos G.S."/>
            <person name="Giddens S.R."/>
            <person name="Jackson R.W."/>
            <person name="Preston G.M."/>
            <person name="Zhang X.-X."/>
            <person name="Moon C.D."/>
            <person name="Gehrig S.M."/>
            <person name="Godfrey S.A.C."/>
            <person name="Knight C.G."/>
            <person name="Malone J.G."/>
            <person name="Robinson Z."/>
            <person name="Spiers A.J."/>
            <person name="Harris S."/>
            <person name="Challis G.L."/>
            <person name="Yaxley A.M."/>
            <person name="Harris D."/>
            <person name="Seeger K."/>
            <person name="Murphy L."/>
            <person name="Rutter S."/>
            <person name="Squares R."/>
            <person name="Quail M.A."/>
            <person name="Saunders E."/>
            <person name="Mavromatis K."/>
            <person name="Brettin T.S."/>
            <person name="Bentley S.D."/>
            <person name="Hothersall J."/>
            <person name="Stephens E."/>
            <person name="Thomas C.M."/>
            <person name="Parkhill J."/>
            <person name="Levy S.B."/>
            <person name="Rainey P.B."/>
            <person name="Thomson N.R."/>
        </authorList>
    </citation>
    <scope>NUCLEOTIDE SEQUENCE [LARGE SCALE GENOMIC DNA]</scope>
    <source>
        <strain>Pf0-1</strain>
    </source>
</reference>
<feature type="chain" id="PRO_0000241719" description="Ubiquinone biosynthesis O-methyltransferase">
    <location>
        <begin position="1"/>
        <end position="232"/>
    </location>
</feature>
<feature type="binding site" evidence="1">
    <location>
        <position position="36"/>
    </location>
    <ligand>
        <name>S-adenosyl-L-methionine</name>
        <dbReference type="ChEBI" id="CHEBI:59789"/>
    </ligand>
</feature>
<feature type="binding site" evidence="1">
    <location>
        <position position="55"/>
    </location>
    <ligand>
        <name>S-adenosyl-L-methionine</name>
        <dbReference type="ChEBI" id="CHEBI:59789"/>
    </ligand>
</feature>
<feature type="binding site" evidence="1">
    <location>
        <position position="76"/>
    </location>
    <ligand>
        <name>S-adenosyl-L-methionine</name>
        <dbReference type="ChEBI" id="CHEBI:59789"/>
    </ligand>
</feature>
<feature type="binding site" evidence="1">
    <location>
        <position position="120"/>
    </location>
    <ligand>
        <name>S-adenosyl-L-methionine</name>
        <dbReference type="ChEBI" id="CHEBI:59789"/>
    </ligand>
</feature>
<evidence type="ECO:0000255" key="1">
    <source>
        <dbReference type="HAMAP-Rule" id="MF_00472"/>
    </source>
</evidence>
<accession>Q3K8T6</accession>
<organism>
    <name type="scientific">Pseudomonas fluorescens (strain Pf0-1)</name>
    <dbReference type="NCBI Taxonomy" id="205922"/>
    <lineage>
        <taxon>Bacteria</taxon>
        <taxon>Pseudomonadati</taxon>
        <taxon>Pseudomonadota</taxon>
        <taxon>Gammaproteobacteria</taxon>
        <taxon>Pseudomonadales</taxon>
        <taxon>Pseudomonadaceae</taxon>
        <taxon>Pseudomonas</taxon>
    </lineage>
</organism>
<proteinExistence type="inferred from homology"/>
<sequence>MSNVDHAEIAKFEALAHRWWDRESEFKPLHDINPLRVNWIDERVNLAGKKVLDVGCGGGILSEAMAQRGATVTGIDMGEAPLAVAQLHQLESGVNVEYRQITAEALAEEMPEQFDVVTCLEMLEHVPDPSSVIRACFRMVKPGGQVFFSTINRNPKAYLFAIVGAEYIMKLLPRGTHDFKKFIRPSELGAWSRMAGLTVKDIIGLTYNPLTKHYKLAADVDVNYMIQTLREE</sequence>
<name>UBIG_PSEPF</name>